<dbReference type="EC" id="2.5.1.6" evidence="1"/>
<dbReference type="EMBL" id="CP000436">
    <property type="protein sequence ID" value="ABI25891.1"/>
    <property type="molecule type" value="Genomic_DNA"/>
</dbReference>
<dbReference type="SMR" id="Q0I559"/>
<dbReference type="KEGG" id="hso:HS_1623"/>
<dbReference type="eggNOG" id="COG0192">
    <property type="taxonomic scope" value="Bacteria"/>
</dbReference>
<dbReference type="HOGENOM" id="CLU_041802_1_1_6"/>
<dbReference type="UniPathway" id="UPA00315">
    <property type="reaction ID" value="UER00080"/>
</dbReference>
<dbReference type="GO" id="GO:0005737">
    <property type="term" value="C:cytoplasm"/>
    <property type="evidence" value="ECO:0007669"/>
    <property type="project" value="UniProtKB-SubCell"/>
</dbReference>
<dbReference type="GO" id="GO:0005524">
    <property type="term" value="F:ATP binding"/>
    <property type="evidence" value="ECO:0007669"/>
    <property type="project" value="UniProtKB-UniRule"/>
</dbReference>
<dbReference type="GO" id="GO:0000287">
    <property type="term" value="F:magnesium ion binding"/>
    <property type="evidence" value="ECO:0007669"/>
    <property type="project" value="UniProtKB-UniRule"/>
</dbReference>
<dbReference type="GO" id="GO:0004478">
    <property type="term" value="F:methionine adenosyltransferase activity"/>
    <property type="evidence" value="ECO:0007669"/>
    <property type="project" value="UniProtKB-UniRule"/>
</dbReference>
<dbReference type="GO" id="GO:0006730">
    <property type="term" value="P:one-carbon metabolic process"/>
    <property type="evidence" value="ECO:0007669"/>
    <property type="project" value="UniProtKB-KW"/>
</dbReference>
<dbReference type="GO" id="GO:0006556">
    <property type="term" value="P:S-adenosylmethionine biosynthetic process"/>
    <property type="evidence" value="ECO:0007669"/>
    <property type="project" value="UniProtKB-UniRule"/>
</dbReference>
<dbReference type="CDD" id="cd18079">
    <property type="entry name" value="S-AdoMet_synt"/>
    <property type="match status" value="1"/>
</dbReference>
<dbReference type="FunFam" id="3.30.300.10:FF:000003">
    <property type="entry name" value="S-adenosylmethionine synthase"/>
    <property type="match status" value="1"/>
</dbReference>
<dbReference type="Gene3D" id="3.30.300.10">
    <property type="match status" value="3"/>
</dbReference>
<dbReference type="HAMAP" id="MF_00086">
    <property type="entry name" value="S_AdoMet_synth1"/>
    <property type="match status" value="1"/>
</dbReference>
<dbReference type="InterPro" id="IPR022631">
    <property type="entry name" value="ADOMET_SYNTHASE_CS"/>
</dbReference>
<dbReference type="InterPro" id="IPR022630">
    <property type="entry name" value="S-AdoMet_synt_C"/>
</dbReference>
<dbReference type="InterPro" id="IPR022629">
    <property type="entry name" value="S-AdoMet_synt_central"/>
</dbReference>
<dbReference type="InterPro" id="IPR022628">
    <property type="entry name" value="S-AdoMet_synt_N"/>
</dbReference>
<dbReference type="InterPro" id="IPR002133">
    <property type="entry name" value="S-AdoMet_synthetase"/>
</dbReference>
<dbReference type="InterPro" id="IPR022636">
    <property type="entry name" value="S-AdoMet_synthetase_sfam"/>
</dbReference>
<dbReference type="NCBIfam" id="TIGR01034">
    <property type="entry name" value="metK"/>
    <property type="match status" value="1"/>
</dbReference>
<dbReference type="PANTHER" id="PTHR11964">
    <property type="entry name" value="S-ADENOSYLMETHIONINE SYNTHETASE"/>
    <property type="match status" value="1"/>
</dbReference>
<dbReference type="Pfam" id="PF02773">
    <property type="entry name" value="S-AdoMet_synt_C"/>
    <property type="match status" value="1"/>
</dbReference>
<dbReference type="Pfam" id="PF02772">
    <property type="entry name" value="S-AdoMet_synt_M"/>
    <property type="match status" value="1"/>
</dbReference>
<dbReference type="Pfam" id="PF00438">
    <property type="entry name" value="S-AdoMet_synt_N"/>
    <property type="match status" value="1"/>
</dbReference>
<dbReference type="PIRSF" id="PIRSF000497">
    <property type="entry name" value="MAT"/>
    <property type="match status" value="1"/>
</dbReference>
<dbReference type="SUPFAM" id="SSF55973">
    <property type="entry name" value="S-adenosylmethionine synthetase"/>
    <property type="match status" value="3"/>
</dbReference>
<dbReference type="PROSITE" id="PS00376">
    <property type="entry name" value="ADOMET_SYNTHASE_1"/>
    <property type="match status" value="1"/>
</dbReference>
<dbReference type="PROSITE" id="PS00377">
    <property type="entry name" value="ADOMET_SYNTHASE_2"/>
    <property type="match status" value="1"/>
</dbReference>
<evidence type="ECO:0000255" key="1">
    <source>
        <dbReference type="HAMAP-Rule" id="MF_00086"/>
    </source>
</evidence>
<proteinExistence type="inferred from homology"/>
<gene>
    <name evidence="1" type="primary">metK</name>
    <name type="ordered locus">HS_1623</name>
</gene>
<keyword id="KW-0067">ATP-binding</keyword>
<keyword id="KW-0963">Cytoplasm</keyword>
<keyword id="KW-0460">Magnesium</keyword>
<keyword id="KW-0479">Metal-binding</keyword>
<keyword id="KW-0547">Nucleotide-binding</keyword>
<keyword id="KW-0554">One-carbon metabolism</keyword>
<keyword id="KW-0630">Potassium</keyword>
<keyword id="KW-0808">Transferase</keyword>
<name>METK_HISS1</name>
<comment type="function">
    <text evidence="1">Catalyzes the formation of S-adenosylmethionine (AdoMet) from methionine and ATP. The overall synthetic reaction is composed of two sequential steps, AdoMet formation and the subsequent tripolyphosphate hydrolysis which occurs prior to release of AdoMet from the enzyme.</text>
</comment>
<comment type="catalytic activity">
    <reaction evidence="1">
        <text>L-methionine + ATP + H2O = S-adenosyl-L-methionine + phosphate + diphosphate</text>
        <dbReference type="Rhea" id="RHEA:21080"/>
        <dbReference type="ChEBI" id="CHEBI:15377"/>
        <dbReference type="ChEBI" id="CHEBI:30616"/>
        <dbReference type="ChEBI" id="CHEBI:33019"/>
        <dbReference type="ChEBI" id="CHEBI:43474"/>
        <dbReference type="ChEBI" id="CHEBI:57844"/>
        <dbReference type="ChEBI" id="CHEBI:59789"/>
        <dbReference type="EC" id="2.5.1.6"/>
    </reaction>
</comment>
<comment type="cofactor">
    <cofactor evidence="1">
        <name>Mg(2+)</name>
        <dbReference type="ChEBI" id="CHEBI:18420"/>
    </cofactor>
    <text evidence="1">Binds 2 divalent ions per subunit.</text>
</comment>
<comment type="cofactor">
    <cofactor evidence="1">
        <name>K(+)</name>
        <dbReference type="ChEBI" id="CHEBI:29103"/>
    </cofactor>
    <text evidence="1">Binds 1 potassium ion per subunit.</text>
</comment>
<comment type="pathway">
    <text evidence="1">Amino-acid biosynthesis; S-adenosyl-L-methionine biosynthesis; S-adenosyl-L-methionine from L-methionine: step 1/1.</text>
</comment>
<comment type="subunit">
    <text evidence="1">Homotetramer; dimer of dimers.</text>
</comment>
<comment type="subcellular location">
    <subcellularLocation>
        <location evidence="1">Cytoplasm</location>
    </subcellularLocation>
</comment>
<comment type="similarity">
    <text evidence="1">Belongs to the AdoMet synthase family.</text>
</comment>
<organism>
    <name type="scientific">Histophilus somni (strain 129Pt)</name>
    <name type="common">Haemophilus somnus</name>
    <dbReference type="NCBI Taxonomy" id="205914"/>
    <lineage>
        <taxon>Bacteria</taxon>
        <taxon>Pseudomonadati</taxon>
        <taxon>Pseudomonadota</taxon>
        <taxon>Gammaproteobacteria</taxon>
        <taxon>Pasteurellales</taxon>
        <taxon>Pasteurellaceae</taxon>
        <taxon>Histophilus</taxon>
    </lineage>
</organism>
<reference key="1">
    <citation type="journal article" date="2007" name="J. Bacteriol.">
        <title>Complete genome sequence of Haemophilus somnus (Histophilus somni) strain 129Pt and comparison to Haemophilus ducreyi 35000HP and Haemophilus influenzae Rd.</title>
        <authorList>
            <person name="Challacombe J.F."/>
            <person name="Duncan A.J."/>
            <person name="Brettin T.S."/>
            <person name="Bruce D."/>
            <person name="Chertkov O."/>
            <person name="Detter J.C."/>
            <person name="Han C.S."/>
            <person name="Misra M."/>
            <person name="Richardson P."/>
            <person name="Tapia R."/>
            <person name="Thayer N."/>
            <person name="Xie G."/>
            <person name="Inzana T.J."/>
        </authorList>
    </citation>
    <scope>NUCLEOTIDE SEQUENCE [LARGE SCALE GENOMIC DNA]</scope>
    <source>
        <strain>129Pt</strain>
    </source>
</reference>
<accession>Q0I559</accession>
<protein>
    <recommendedName>
        <fullName evidence="1">S-adenosylmethionine synthase</fullName>
        <shortName evidence="1">AdoMet synthase</shortName>
        <ecNumber evidence="1">2.5.1.6</ecNumber>
    </recommendedName>
    <alternativeName>
        <fullName evidence="1">MAT</fullName>
    </alternativeName>
    <alternativeName>
        <fullName evidence="1">Methionine adenosyltransferase</fullName>
    </alternativeName>
</protein>
<sequence>MSSYLFTSESVSEGHPDKIADQISDAVLDEILRQDPKARVACETYVKTGMALVGGEITTSAWVDIENLTRQVICDIGYKHSDIGFDGHSCAVLNAIGKQSSDINQGVDRESPLDQGAGDQGIMFGYATNETDVLMPAAITYAHRLMERQAQVRKKGILDWLRPDAKSQVTLKYEDNRIVGIDAVVLSTQHSDNVDQKTVHEGVMEEIIKPILPAEWLSKETKYFINPTGRFVIGGPMGDCGLTGRKIIVDTYGGAARHGGGAFSGKDPSKVDRSAAYAARYVAKNIVAAGLADRCEIQLSYAIGVAEPTSIMVETFGTGKVANELLVGLIREFFDLRPYGLIKMLDLIQPIYRQTAAYGHFGRAQFPWEKVDRAEELRAAASLK</sequence>
<feature type="chain" id="PRO_0000302921" description="S-adenosylmethionine synthase">
    <location>
        <begin position="1"/>
        <end position="384"/>
    </location>
</feature>
<feature type="region of interest" description="Flexible loop" evidence="1">
    <location>
        <begin position="99"/>
        <end position="109"/>
    </location>
</feature>
<feature type="binding site" description="in other chain" evidence="1">
    <location>
        <position position="15"/>
    </location>
    <ligand>
        <name>ATP</name>
        <dbReference type="ChEBI" id="CHEBI:30616"/>
        <note>ligand shared between two neighboring subunits</note>
    </ligand>
</feature>
<feature type="binding site" evidence="1">
    <location>
        <position position="17"/>
    </location>
    <ligand>
        <name>Mg(2+)</name>
        <dbReference type="ChEBI" id="CHEBI:18420"/>
    </ligand>
</feature>
<feature type="binding site" evidence="1">
    <location>
        <position position="43"/>
    </location>
    <ligand>
        <name>K(+)</name>
        <dbReference type="ChEBI" id="CHEBI:29103"/>
    </ligand>
</feature>
<feature type="binding site" description="in other chain" evidence="1">
    <location>
        <position position="56"/>
    </location>
    <ligand>
        <name>L-methionine</name>
        <dbReference type="ChEBI" id="CHEBI:57844"/>
        <note>ligand shared between two neighboring subunits</note>
    </ligand>
</feature>
<feature type="binding site" description="in other chain" evidence="1">
    <location>
        <position position="99"/>
    </location>
    <ligand>
        <name>L-methionine</name>
        <dbReference type="ChEBI" id="CHEBI:57844"/>
        <note>ligand shared between two neighboring subunits</note>
    </ligand>
</feature>
<feature type="binding site" description="in other chain" evidence="1">
    <location>
        <begin position="164"/>
        <end position="166"/>
    </location>
    <ligand>
        <name>ATP</name>
        <dbReference type="ChEBI" id="CHEBI:30616"/>
        <note>ligand shared between two neighboring subunits</note>
    </ligand>
</feature>
<feature type="binding site" description="in other chain" evidence="1">
    <location>
        <begin position="230"/>
        <end position="231"/>
    </location>
    <ligand>
        <name>ATP</name>
        <dbReference type="ChEBI" id="CHEBI:30616"/>
        <note>ligand shared between two neighboring subunits</note>
    </ligand>
</feature>
<feature type="binding site" evidence="1">
    <location>
        <position position="239"/>
    </location>
    <ligand>
        <name>ATP</name>
        <dbReference type="ChEBI" id="CHEBI:30616"/>
        <note>ligand shared between two neighboring subunits</note>
    </ligand>
</feature>
<feature type="binding site" evidence="1">
    <location>
        <position position="239"/>
    </location>
    <ligand>
        <name>L-methionine</name>
        <dbReference type="ChEBI" id="CHEBI:57844"/>
        <note>ligand shared between two neighboring subunits</note>
    </ligand>
</feature>
<feature type="binding site" description="in other chain" evidence="1">
    <location>
        <begin position="245"/>
        <end position="246"/>
    </location>
    <ligand>
        <name>ATP</name>
        <dbReference type="ChEBI" id="CHEBI:30616"/>
        <note>ligand shared between two neighboring subunits</note>
    </ligand>
</feature>
<feature type="binding site" evidence="1">
    <location>
        <position position="262"/>
    </location>
    <ligand>
        <name>ATP</name>
        <dbReference type="ChEBI" id="CHEBI:30616"/>
        <note>ligand shared between two neighboring subunits</note>
    </ligand>
</feature>
<feature type="binding site" evidence="1">
    <location>
        <position position="266"/>
    </location>
    <ligand>
        <name>ATP</name>
        <dbReference type="ChEBI" id="CHEBI:30616"/>
        <note>ligand shared between two neighboring subunits</note>
    </ligand>
</feature>
<feature type="binding site" description="in other chain" evidence="1">
    <location>
        <position position="270"/>
    </location>
    <ligand>
        <name>L-methionine</name>
        <dbReference type="ChEBI" id="CHEBI:57844"/>
        <note>ligand shared between two neighboring subunits</note>
    </ligand>
</feature>